<proteinExistence type="inferred from homology"/>
<keyword id="KW-0119">Carbohydrate metabolism</keyword>
<keyword id="KW-0961">Cell wall biogenesis/degradation</keyword>
<keyword id="KW-0325">Glycoprotein</keyword>
<keyword id="KW-0326">Glycosidase</keyword>
<keyword id="KW-0378">Hydrolase</keyword>
<keyword id="KW-0624">Polysaccharide degradation</keyword>
<keyword id="KW-1185">Reference proteome</keyword>
<keyword id="KW-0677">Repeat</keyword>
<keyword id="KW-0964">Secreted</keyword>
<keyword id="KW-0732">Signal</keyword>
<evidence type="ECO:0000250" key="1"/>
<evidence type="ECO:0000255" key="2"/>
<evidence type="ECO:0000255" key="3">
    <source>
        <dbReference type="PROSITE-ProRule" id="PRU10052"/>
    </source>
</evidence>
<evidence type="ECO:0000256" key="4">
    <source>
        <dbReference type="SAM" id="MobiDB-lite"/>
    </source>
</evidence>
<evidence type="ECO:0000305" key="5"/>
<comment type="function">
    <text evidence="1">Pectinolytic enzyme involved in the degradation of xylogalacturonan (xga), a galacturonan backbone heavily substituted with xylose, and which is one important component of the hairy regions of pectin. Activity requires a galacturonic acid backbone substituted with xylose (By similarity).</text>
</comment>
<comment type="subcellular location">
    <subcellularLocation>
        <location evidence="1">Secreted</location>
    </subcellularLocation>
</comment>
<comment type="similarity">
    <text evidence="5">Belongs to the glycosyl hydrolase 28 family.</text>
</comment>
<sequence>MISLNSIFLLSLVGLSRAAPSRSETSPDRTIKPRAACTPTAGGSSSTDDVPAIQEAITSCGDGGIIIIPADTTYYLNSVLDFKGCSNCDFQVEGLLQFTSSTDYWNGKTAMITVSDIDGLKLRSVTGSGVIDGNGQESWDKFAEDSSYKRPTLLYITGGSNIEVSGLRQKNPPNVFISVKGDTSNAQFTSLTMDATSNSDNLPKNTDAFDIGASTYVTISSVAITNDDDCVAFKPGANYVTVENVSCTGSHGISVGSLGKSSDDTVQNVYARNITMINSSKAAGIKTYPSGGDHGLSTVKNATFEDFIVDGCDYAFQIQSCYGEDDTYCEENPGDAVLEGIVVKGFTGTTSDKEDPVVANLNCGSKGTCDVTISGFEVKAPSGDAKILCGNTPSDLGVTCSSGASG</sequence>
<accession>Q2UBD8</accession>
<dbReference type="EC" id="3.2.1.-"/>
<dbReference type="EMBL" id="BA000052">
    <property type="protein sequence ID" value="BAE61127.1"/>
    <property type="molecule type" value="Genomic_DNA"/>
</dbReference>
<dbReference type="RefSeq" id="XP_001822260.1">
    <property type="nucleotide sequence ID" value="XM_001822208.1"/>
</dbReference>
<dbReference type="SMR" id="Q2UBD8"/>
<dbReference type="STRING" id="510516.Q2UBD8"/>
<dbReference type="CAZy" id="GH28">
    <property type="family name" value="Glycoside Hydrolase Family 28"/>
</dbReference>
<dbReference type="GlyCosmos" id="Q2UBD8">
    <property type="glycosylation" value="4 sites, No reported glycans"/>
</dbReference>
<dbReference type="EnsemblFungi" id="BAE61127">
    <property type="protein sequence ID" value="BAE61127"/>
    <property type="gene ID" value="AO090102000011"/>
</dbReference>
<dbReference type="GeneID" id="5994305"/>
<dbReference type="KEGG" id="aor:AO090102000011"/>
<dbReference type="VEuPathDB" id="FungiDB:AO090102000011"/>
<dbReference type="HOGENOM" id="CLU_016031_1_3_1"/>
<dbReference type="OMA" id="FKPGANY"/>
<dbReference type="OrthoDB" id="31334at5052"/>
<dbReference type="Proteomes" id="UP000006564">
    <property type="component" value="Chromosome 4"/>
</dbReference>
<dbReference type="GO" id="GO:0005576">
    <property type="term" value="C:extracellular region"/>
    <property type="evidence" value="ECO:0007669"/>
    <property type="project" value="UniProtKB-SubCell"/>
</dbReference>
<dbReference type="GO" id="GO:0004650">
    <property type="term" value="F:polygalacturonase activity"/>
    <property type="evidence" value="ECO:0007669"/>
    <property type="project" value="InterPro"/>
</dbReference>
<dbReference type="GO" id="GO:0071555">
    <property type="term" value="P:cell wall organization"/>
    <property type="evidence" value="ECO:0007669"/>
    <property type="project" value="UniProtKB-KW"/>
</dbReference>
<dbReference type="GO" id="GO:0000272">
    <property type="term" value="P:polysaccharide catabolic process"/>
    <property type="evidence" value="ECO:0007669"/>
    <property type="project" value="UniProtKB-KW"/>
</dbReference>
<dbReference type="Gene3D" id="2.160.20.10">
    <property type="entry name" value="Single-stranded right-handed beta-helix, Pectin lyase-like"/>
    <property type="match status" value="1"/>
</dbReference>
<dbReference type="InterPro" id="IPR000743">
    <property type="entry name" value="Glyco_hydro_28"/>
</dbReference>
<dbReference type="InterPro" id="IPR012334">
    <property type="entry name" value="Pectin_lyas_fold"/>
</dbReference>
<dbReference type="InterPro" id="IPR011050">
    <property type="entry name" value="Pectin_lyase_fold/virulence"/>
</dbReference>
<dbReference type="PANTHER" id="PTHR31736">
    <property type="match status" value="1"/>
</dbReference>
<dbReference type="PANTHER" id="PTHR31736:SF9">
    <property type="entry name" value="ENDO-XYLOGALACTURONAN HYDROLASE A-RELATED"/>
    <property type="match status" value="1"/>
</dbReference>
<dbReference type="Pfam" id="PF00295">
    <property type="entry name" value="Glyco_hydro_28"/>
    <property type="match status" value="1"/>
</dbReference>
<dbReference type="SUPFAM" id="SSF51126">
    <property type="entry name" value="Pectin lyase-like"/>
    <property type="match status" value="1"/>
</dbReference>
<dbReference type="PROSITE" id="PS00502">
    <property type="entry name" value="POLYGALACTURONASE"/>
    <property type="match status" value="1"/>
</dbReference>
<organism>
    <name type="scientific">Aspergillus oryzae (strain ATCC 42149 / RIB 40)</name>
    <name type="common">Yellow koji mold</name>
    <dbReference type="NCBI Taxonomy" id="510516"/>
    <lineage>
        <taxon>Eukaryota</taxon>
        <taxon>Fungi</taxon>
        <taxon>Dikarya</taxon>
        <taxon>Ascomycota</taxon>
        <taxon>Pezizomycotina</taxon>
        <taxon>Eurotiomycetes</taxon>
        <taxon>Eurotiomycetidae</taxon>
        <taxon>Eurotiales</taxon>
        <taxon>Aspergillaceae</taxon>
        <taxon>Aspergillus</taxon>
        <taxon>Aspergillus subgen. Circumdati</taxon>
    </lineage>
</organism>
<gene>
    <name type="primary">xghA</name>
    <name type="ORF">AO090102000011</name>
</gene>
<protein>
    <recommendedName>
        <fullName>Probable endo-xylogalacturonan hydrolase A</fullName>
        <ecNumber>3.2.1.-</ecNumber>
    </recommendedName>
</protein>
<name>XGHA_ASPOR</name>
<feature type="signal peptide" evidence="2">
    <location>
        <begin position="1"/>
        <end position="18"/>
    </location>
</feature>
<feature type="chain" id="PRO_0000394699" description="Probable endo-xylogalacturonan hydrolase A">
    <location>
        <begin position="19"/>
        <end position="406"/>
    </location>
</feature>
<feature type="repeat" description="PbH1 1">
    <location>
        <begin position="183"/>
        <end position="213"/>
    </location>
</feature>
<feature type="repeat" description="PbH1 2">
    <location>
        <begin position="214"/>
        <end position="235"/>
    </location>
</feature>
<feature type="repeat" description="PbH1 3">
    <location>
        <begin position="237"/>
        <end position="257"/>
    </location>
</feature>
<feature type="repeat" description="PbH1 4">
    <location>
        <begin position="266"/>
        <end position="289"/>
    </location>
</feature>
<feature type="repeat" description="PbH1 5">
    <location>
        <begin position="299"/>
        <end position="320"/>
    </location>
</feature>
<feature type="repeat" description="PbH1 6">
    <location>
        <begin position="368"/>
        <end position="390"/>
    </location>
</feature>
<feature type="region of interest" description="Disordered" evidence="4">
    <location>
        <begin position="20"/>
        <end position="49"/>
    </location>
</feature>
<feature type="active site" description="Proton donor" evidence="3">
    <location>
        <position position="228"/>
    </location>
</feature>
<feature type="active site" evidence="3">
    <location>
        <position position="251"/>
    </location>
</feature>
<feature type="glycosylation site" description="N-linked (GlcNAc...) asparagine" evidence="2">
    <location>
        <position position="244"/>
    </location>
</feature>
<feature type="glycosylation site" description="N-linked (GlcNAc...) asparagine" evidence="2">
    <location>
        <position position="273"/>
    </location>
</feature>
<feature type="glycosylation site" description="N-linked (GlcNAc...) asparagine" evidence="2">
    <location>
        <position position="278"/>
    </location>
</feature>
<feature type="glycosylation site" description="N-linked (GlcNAc...) asparagine" evidence="2">
    <location>
        <position position="301"/>
    </location>
</feature>
<reference key="1">
    <citation type="journal article" date="2005" name="Nature">
        <title>Genome sequencing and analysis of Aspergillus oryzae.</title>
        <authorList>
            <person name="Machida M."/>
            <person name="Asai K."/>
            <person name="Sano M."/>
            <person name="Tanaka T."/>
            <person name="Kumagai T."/>
            <person name="Terai G."/>
            <person name="Kusumoto K."/>
            <person name="Arima T."/>
            <person name="Akita O."/>
            <person name="Kashiwagi Y."/>
            <person name="Abe K."/>
            <person name="Gomi K."/>
            <person name="Horiuchi H."/>
            <person name="Kitamoto K."/>
            <person name="Kobayashi T."/>
            <person name="Takeuchi M."/>
            <person name="Denning D.W."/>
            <person name="Galagan J.E."/>
            <person name="Nierman W.C."/>
            <person name="Yu J."/>
            <person name="Archer D.B."/>
            <person name="Bennett J.W."/>
            <person name="Bhatnagar D."/>
            <person name="Cleveland T.E."/>
            <person name="Fedorova N.D."/>
            <person name="Gotoh O."/>
            <person name="Horikawa H."/>
            <person name="Hosoyama A."/>
            <person name="Ichinomiya M."/>
            <person name="Igarashi R."/>
            <person name="Iwashita K."/>
            <person name="Juvvadi P.R."/>
            <person name="Kato M."/>
            <person name="Kato Y."/>
            <person name="Kin T."/>
            <person name="Kokubun A."/>
            <person name="Maeda H."/>
            <person name="Maeyama N."/>
            <person name="Maruyama J."/>
            <person name="Nagasaki H."/>
            <person name="Nakajima T."/>
            <person name="Oda K."/>
            <person name="Okada K."/>
            <person name="Paulsen I."/>
            <person name="Sakamoto K."/>
            <person name="Sawano T."/>
            <person name="Takahashi M."/>
            <person name="Takase K."/>
            <person name="Terabayashi Y."/>
            <person name="Wortman J.R."/>
            <person name="Yamada O."/>
            <person name="Yamagata Y."/>
            <person name="Anazawa H."/>
            <person name="Hata Y."/>
            <person name="Koide Y."/>
            <person name="Komori T."/>
            <person name="Koyama Y."/>
            <person name="Minetoki T."/>
            <person name="Suharnan S."/>
            <person name="Tanaka A."/>
            <person name="Isono K."/>
            <person name="Kuhara S."/>
            <person name="Ogasawara N."/>
            <person name="Kikuchi H."/>
        </authorList>
    </citation>
    <scope>NUCLEOTIDE SEQUENCE [LARGE SCALE GENOMIC DNA]</scope>
    <source>
        <strain>ATCC 42149 / RIB 40</strain>
    </source>
</reference>